<name>NCAP_CVBEN</name>
<accession>Q91A22</accession>
<proteinExistence type="inferred from homology"/>
<protein>
    <recommendedName>
        <fullName evidence="2">Nucleoprotein</fullName>
    </recommendedName>
    <alternativeName>
        <fullName evidence="2">Nucleocapsid protein</fullName>
        <shortName evidence="2">NC</shortName>
        <shortName evidence="2">Protein N</shortName>
    </alternativeName>
</protein>
<organism>
    <name type="scientific">Bovine coronavirus (strain 98TXSF-110-ENT)</name>
    <name type="common">BCoV-ENT</name>
    <name type="synonym">BCV</name>
    <dbReference type="NCBI Taxonomy" id="233262"/>
    <lineage>
        <taxon>Viruses</taxon>
        <taxon>Riboviria</taxon>
        <taxon>Orthornavirae</taxon>
        <taxon>Pisuviricota</taxon>
        <taxon>Pisoniviricetes</taxon>
        <taxon>Nidovirales</taxon>
        <taxon>Cornidovirineae</taxon>
        <taxon>Coronaviridae</taxon>
        <taxon>Orthocoronavirinae</taxon>
        <taxon>Betacoronavirus</taxon>
        <taxon>Embecovirus</taxon>
        <taxon>Betacoronavirus 1</taxon>
    </lineage>
</organism>
<sequence length="448" mass="49295">MSFTPGKQSSSRASSGNRSGNGILKWADQSDQSRNVQTRGRRAQPKQTATSQQPSGGNVVPYYSWFSGITQFQKGKEFEFAEGQGVPIAPGVPATEAKGYWYRHNRRSFKTADGNQRQLLPRWYFYYLGTGPHAKDQYGTDIDGVYWVASNQADVNTPADILDRDPSSDEAIPTRFPPGTVLPQGYYIEGSGRSAPNSRSTSRASSRASSAGSRSRANSGNRTPTSGVTPDMADQIASLVLAKLGKDAAKPQQVTKQTAKEIRQKILNKPRQKRSPNKQCTVQQCFGKRGPNQNFGGGEMLKLGTSDPQFPILAELAPTAGAFFFGSRLELAKVQNLSGNLDEPQKDVYELRYNGAIRFDSTLSGFETIMKVLNENLNAYQQQDGTMNMSPKPQRQRGQKNGQGENDNISVAAPKSRVQQNKIRELTAEDISLLKKMDEPFTEDTSEI</sequence>
<feature type="chain" id="PRO_0000105989" description="Nucleoprotein">
    <location>
        <begin position="1"/>
        <end position="448"/>
    </location>
</feature>
<feature type="domain" description="CoV N NTD" evidence="3">
    <location>
        <begin position="61"/>
        <end position="190"/>
    </location>
</feature>
<feature type="domain" description="CoV N CTD" evidence="4">
    <location>
        <begin position="259"/>
        <end position="384"/>
    </location>
</feature>
<feature type="region of interest" description="Disordered" evidence="5">
    <location>
        <begin position="1"/>
        <end position="55"/>
    </location>
</feature>
<feature type="region of interest" description="RNA-binding" evidence="2">
    <location>
        <begin position="52"/>
        <end position="194"/>
    </location>
</feature>
<feature type="region of interest" description="Disordered" evidence="5">
    <location>
        <begin position="158"/>
        <end position="231"/>
    </location>
</feature>
<feature type="region of interest" description="Dimerization" evidence="2">
    <location>
        <begin position="266"/>
        <end position="384"/>
    </location>
</feature>
<feature type="region of interest" description="Disordered" evidence="5">
    <location>
        <begin position="383"/>
        <end position="420"/>
    </location>
</feature>
<feature type="compositionally biased region" description="Low complexity" evidence="5">
    <location>
        <begin position="9"/>
        <end position="22"/>
    </location>
</feature>
<feature type="compositionally biased region" description="Polar residues" evidence="5">
    <location>
        <begin position="29"/>
        <end position="38"/>
    </location>
</feature>
<feature type="compositionally biased region" description="Polar residues" evidence="5">
    <location>
        <begin position="45"/>
        <end position="55"/>
    </location>
</feature>
<feature type="compositionally biased region" description="Low complexity" evidence="5">
    <location>
        <begin position="193"/>
        <end position="223"/>
    </location>
</feature>
<feature type="compositionally biased region" description="Polar residues" evidence="5">
    <location>
        <begin position="383"/>
        <end position="393"/>
    </location>
</feature>
<feature type="compositionally biased region" description="Polar residues" evidence="5">
    <location>
        <begin position="399"/>
        <end position="409"/>
    </location>
</feature>
<feature type="binding site" evidence="1">
    <location>
        <position position="106"/>
    </location>
    <ligand>
        <name>RNA</name>
        <dbReference type="ChEBI" id="CHEBI:33697"/>
    </ligand>
</feature>
<feature type="binding site" evidence="1">
    <location>
        <position position="122"/>
    </location>
    <ligand>
        <name>RNA</name>
        <dbReference type="ChEBI" id="CHEBI:33697"/>
    </ligand>
</feature>
<feature type="binding site" evidence="1">
    <location>
        <position position="164"/>
    </location>
    <ligand>
        <name>RNA</name>
        <dbReference type="ChEBI" id="CHEBI:33697"/>
    </ligand>
</feature>
<feature type="modified residue" description="Phosphoserine; by host" evidence="2">
    <location>
        <position position="167"/>
    </location>
</feature>
<feature type="modified residue" description="Phosphothreonine; by host" evidence="2">
    <location>
        <position position="174"/>
    </location>
</feature>
<feature type="modified residue" description="Phosphoserine; by host" evidence="2">
    <location>
        <position position="191"/>
    </location>
</feature>
<feature type="modified residue" description="Phosphoserine; by host" evidence="2">
    <location>
        <position position="390"/>
    </location>
</feature>
<feature type="modified residue" description="Phosphothreonine; by host" evidence="2">
    <location>
        <position position="427"/>
    </location>
</feature>
<comment type="function">
    <text evidence="2">Packages the positive strand viral genome RNA into a helical ribonucleocapsid (RNP) and plays a fundamental role during virion assembly through its interactions with the viral genome and membrane protein M. Plays an important role in enhancing the efficiency of subgenomic viral RNA transcription as well as viral replication.</text>
</comment>
<comment type="subunit">
    <text evidence="2">Homooligomer. Both monomeric and oligomeric forms interact with RNA. Interacts with protein M. Interacts with NSP3; this interaction serves to tether the genome to the newly translated replicase-transcriptase complex at a very early stage of infection.</text>
</comment>
<comment type="subcellular location">
    <subcellularLocation>
        <location evidence="2">Virion</location>
    </subcellularLocation>
    <subcellularLocation>
        <location evidence="2">Host endoplasmic reticulum-Golgi intermediate compartment</location>
    </subcellularLocation>
    <subcellularLocation>
        <location evidence="2">Host Golgi apparatus</location>
    </subcellularLocation>
    <text evidence="2">Located inside the virion, complexed with the viral RNA. Probably associates with ER-derived membranes where it participates in viral RNA synthesis and virus budding.</text>
</comment>
<comment type="PTM">
    <text evidence="2">ADP-ribosylated. The ADP-ribosylation is retained in the virion during infection.</text>
</comment>
<comment type="PTM">
    <text evidence="2">Phosphorylated on serine and threonine residues.</text>
</comment>
<comment type="similarity">
    <text evidence="2">Belongs to the betacoronavirus nucleocapsid protein family.</text>
</comment>
<dbReference type="EMBL" id="AF391541">
    <property type="protein sequence ID" value="AAK83362.1"/>
    <property type="molecule type" value="Genomic_RNA"/>
</dbReference>
<dbReference type="RefSeq" id="NP_150083.1">
    <property type="nucleotide sequence ID" value="NC_003045.1"/>
</dbReference>
<dbReference type="SMR" id="Q91A22"/>
<dbReference type="GeneID" id="921687"/>
<dbReference type="KEGG" id="vg:921687"/>
<dbReference type="Proteomes" id="UP000008570">
    <property type="component" value="Segment"/>
</dbReference>
<dbReference type="GO" id="GO:0044172">
    <property type="term" value="C:host cell endoplasmic reticulum-Golgi intermediate compartment"/>
    <property type="evidence" value="ECO:0007669"/>
    <property type="project" value="UniProtKB-SubCell"/>
</dbReference>
<dbReference type="GO" id="GO:0044177">
    <property type="term" value="C:host cell Golgi apparatus"/>
    <property type="evidence" value="ECO:0007669"/>
    <property type="project" value="UniProtKB-SubCell"/>
</dbReference>
<dbReference type="GO" id="GO:1990904">
    <property type="term" value="C:ribonucleoprotein complex"/>
    <property type="evidence" value="ECO:0007669"/>
    <property type="project" value="UniProtKB-KW"/>
</dbReference>
<dbReference type="GO" id="GO:0019013">
    <property type="term" value="C:viral nucleocapsid"/>
    <property type="evidence" value="ECO:0007669"/>
    <property type="project" value="UniProtKB-UniRule"/>
</dbReference>
<dbReference type="GO" id="GO:0003723">
    <property type="term" value="F:RNA binding"/>
    <property type="evidence" value="ECO:0007669"/>
    <property type="project" value="UniProtKB-UniRule"/>
</dbReference>
<dbReference type="CDD" id="cd21595">
    <property type="entry name" value="CoV_N-CTD"/>
    <property type="match status" value="1"/>
</dbReference>
<dbReference type="CDD" id="cd21554">
    <property type="entry name" value="CoV_N-NTD"/>
    <property type="match status" value="1"/>
</dbReference>
<dbReference type="HAMAP" id="MF_04096">
    <property type="entry name" value="BETA_CORONA_NCAP"/>
    <property type="match status" value="1"/>
</dbReference>
<dbReference type="InterPro" id="IPR044344">
    <property type="entry name" value="N_prot_C_CoV"/>
</dbReference>
<dbReference type="InterPro" id="IPR044345">
    <property type="entry name" value="N_prot_N_CoV"/>
</dbReference>
<dbReference type="InterPro" id="IPR043505">
    <property type="entry name" value="NCAP_bCoV"/>
</dbReference>
<dbReference type="InterPro" id="IPR001218">
    <property type="entry name" value="Nucleocap_CoV"/>
</dbReference>
<dbReference type="InterPro" id="IPR037179">
    <property type="entry name" value="Nucleocapsid_C"/>
</dbReference>
<dbReference type="InterPro" id="IPR037195">
    <property type="entry name" value="Nucleocapsid_N"/>
</dbReference>
<dbReference type="Pfam" id="PF00937">
    <property type="entry name" value="CoV_nucleocap"/>
    <property type="match status" value="1"/>
</dbReference>
<dbReference type="PIRSF" id="PIRSF003888">
    <property type="entry name" value="Corona_nucleocap"/>
    <property type="match status" value="1"/>
</dbReference>
<dbReference type="SUPFAM" id="SSF110304">
    <property type="entry name" value="Coronavirus RNA-binding domain"/>
    <property type="match status" value="1"/>
</dbReference>
<dbReference type="SUPFAM" id="SSF103068">
    <property type="entry name" value="Nucleocapsid protein dimerization domain"/>
    <property type="match status" value="1"/>
</dbReference>
<dbReference type="PROSITE" id="PS51929">
    <property type="entry name" value="COV_N_CTD"/>
    <property type="match status" value="1"/>
</dbReference>
<dbReference type="PROSITE" id="PS51928">
    <property type="entry name" value="COV_N_NTD"/>
    <property type="match status" value="1"/>
</dbReference>
<evidence type="ECO:0000250" key="1">
    <source>
        <dbReference type="UniProtKB" id="P0DTC9"/>
    </source>
</evidence>
<evidence type="ECO:0000255" key="2">
    <source>
        <dbReference type="HAMAP-Rule" id="MF_04096"/>
    </source>
</evidence>
<evidence type="ECO:0000255" key="3">
    <source>
        <dbReference type="PROSITE-ProRule" id="PRU01276"/>
    </source>
</evidence>
<evidence type="ECO:0000255" key="4">
    <source>
        <dbReference type="PROSITE-ProRule" id="PRU01277"/>
    </source>
</evidence>
<evidence type="ECO:0000256" key="5">
    <source>
        <dbReference type="SAM" id="MobiDB-lite"/>
    </source>
</evidence>
<reference key="1">
    <citation type="journal article" date="2001" name="J. Gen. Virol.">
        <title>Comparison of genomic and predicted amino acid sequences of respiratory and enteric bovine coronaviruses isolated from the same animal with fatal shipping pneumonia.</title>
        <authorList>
            <person name="Chouljenko V.N."/>
            <person name="Lin X.Q."/>
            <person name="Storz J."/>
            <person name="Kousoulas K.G."/>
            <person name="Gorbalenya A.E."/>
        </authorList>
    </citation>
    <scope>NUCLEOTIDE SEQUENCE [GENOMIC RNA]</scope>
</reference>
<keyword id="KW-0013">ADP-ribosylation</keyword>
<keyword id="KW-1040">Host Golgi apparatus</keyword>
<keyword id="KW-0597">Phosphoprotein</keyword>
<keyword id="KW-0687">Ribonucleoprotein</keyword>
<keyword id="KW-0694">RNA-binding</keyword>
<keyword id="KW-0804">Transcription</keyword>
<keyword id="KW-0805">Transcription regulation</keyword>
<keyword id="KW-0543">Viral nucleoprotein</keyword>
<keyword id="KW-0946">Virion</keyword>
<organismHost>
    <name type="scientific">Bos taurus</name>
    <name type="common">Bovine</name>
    <dbReference type="NCBI Taxonomy" id="9913"/>
</organismHost>
<gene>
    <name evidence="2" type="primary">N</name>
    <name type="ORF">7a</name>
</gene>